<keyword id="KW-0025">Alternative splicing</keyword>
<keyword id="KW-0150">Chloroplast</keyword>
<keyword id="KW-0472">Membrane</keyword>
<keyword id="KW-0934">Plastid</keyword>
<keyword id="KW-1185">Reference proteome</keyword>
<keyword id="KW-0809">Transit peptide</keyword>
<keyword id="KW-0812">Transmembrane</keyword>
<keyword id="KW-1133">Transmembrane helix</keyword>
<feature type="transit peptide" description="Chloroplast" evidence="1">
    <location>
        <begin position="1"/>
        <end position="87"/>
    </location>
</feature>
<feature type="chain" id="PRO_0000433336" description="Rhomboid-like protein 17, chloroplastic" evidence="1">
    <location>
        <begin position="88"/>
        <end position="320"/>
    </location>
</feature>
<feature type="transmembrane region" description="Helical" evidence="1">
    <location>
        <begin position="116"/>
        <end position="136"/>
    </location>
</feature>
<feature type="transmembrane region" description="Helical" evidence="1">
    <location>
        <begin position="160"/>
        <end position="180"/>
    </location>
</feature>
<feature type="transmembrane region" description="Helical" evidence="1">
    <location>
        <begin position="199"/>
        <end position="219"/>
    </location>
</feature>
<feature type="transmembrane region" description="Helical" evidence="1">
    <location>
        <begin position="247"/>
        <end position="267"/>
    </location>
</feature>
<feature type="transmembrane region" description="Helical" evidence="1">
    <location>
        <begin position="295"/>
        <end position="315"/>
    </location>
</feature>
<feature type="splice variant" id="VSP_057735" description="In isoform 3 and isoform 4.">
    <location>
        <begin position="128"/>
        <end position="146"/>
    </location>
</feature>
<feature type="splice variant" id="VSP_057736" description="In isoform 2 and isoform 3.">
    <location>
        <begin position="273"/>
        <end position="275"/>
    </location>
</feature>
<feature type="splice variant" id="VSP_057737" description="In isoform 5.">
    <location>
        <begin position="276"/>
        <end position="289"/>
    </location>
</feature>
<feature type="sequence conflict" description="In Ref. 4; ABE65771/ABE65770 and 3; AAU44435/AAU44434." evidence="4" ref="4 3">
    <original>I</original>
    <variation>V</variation>
    <location>
        <position position="4"/>
    </location>
</feature>
<sequence>MHAIFSSFSRKVVVNVGASSQSQLTKMVKKKPNQSRHLLPSRLSSPSSVPHFVPSAVSRSAKVHGFFASKLGNTNLKLKFGNVMESRAGFFSSELPSHGFESGGFTGFQKRGWKSWINGANGVVFGLVIANAAVFTMWRVSDRSWMLSTYSFTSGYIHTLITSGFSHIGTSQIILNMIGISYFGSRIARTLGPLYLLKLYFAGALGGSVCFLSYHALLATLKGEGVVIKDHQSTAPISQLLGADGSMFAIALLDMFIYPKVTTYFALMLRVHVMFRIINLGVEILNIPEGGPNHIASSSGQLGGVVVAAMAWARIKKGRF</sequence>
<reference key="1">
    <citation type="journal article" date="2000" name="Nature">
        <title>Sequence and analysis of chromosome 1 of the plant Arabidopsis thaliana.</title>
        <authorList>
            <person name="Theologis A."/>
            <person name="Ecker J.R."/>
            <person name="Palm C.J."/>
            <person name="Federspiel N.A."/>
            <person name="Kaul S."/>
            <person name="White O."/>
            <person name="Alonso J."/>
            <person name="Altafi H."/>
            <person name="Araujo R."/>
            <person name="Bowman C.L."/>
            <person name="Brooks S.Y."/>
            <person name="Buehler E."/>
            <person name="Chan A."/>
            <person name="Chao Q."/>
            <person name="Chen H."/>
            <person name="Cheuk R.F."/>
            <person name="Chin C.W."/>
            <person name="Chung M.K."/>
            <person name="Conn L."/>
            <person name="Conway A.B."/>
            <person name="Conway A.R."/>
            <person name="Creasy T.H."/>
            <person name="Dewar K."/>
            <person name="Dunn P."/>
            <person name="Etgu P."/>
            <person name="Feldblyum T.V."/>
            <person name="Feng J.-D."/>
            <person name="Fong B."/>
            <person name="Fujii C.Y."/>
            <person name="Gill J.E."/>
            <person name="Goldsmith A.D."/>
            <person name="Haas B."/>
            <person name="Hansen N.F."/>
            <person name="Hughes B."/>
            <person name="Huizar L."/>
            <person name="Hunter J.L."/>
            <person name="Jenkins J."/>
            <person name="Johnson-Hopson C."/>
            <person name="Khan S."/>
            <person name="Khaykin E."/>
            <person name="Kim C.J."/>
            <person name="Koo H.L."/>
            <person name="Kremenetskaia I."/>
            <person name="Kurtz D.B."/>
            <person name="Kwan A."/>
            <person name="Lam B."/>
            <person name="Langin-Hooper S."/>
            <person name="Lee A."/>
            <person name="Lee J.M."/>
            <person name="Lenz C.A."/>
            <person name="Li J.H."/>
            <person name="Li Y.-P."/>
            <person name="Lin X."/>
            <person name="Liu S.X."/>
            <person name="Liu Z.A."/>
            <person name="Luros J.S."/>
            <person name="Maiti R."/>
            <person name="Marziali A."/>
            <person name="Militscher J."/>
            <person name="Miranda M."/>
            <person name="Nguyen M."/>
            <person name="Nierman W.C."/>
            <person name="Osborne B.I."/>
            <person name="Pai G."/>
            <person name="Peterson J."/>
            <person name="Pham P.K."/>
            <person name="Rizzo M."/>
            <person name="Rooney T."/>
            <person name="Rowley D."/>
            <person name="Sakano H."/>
            <person name="Salzberg S.L."/>
            <person name="Schwartz J.R."/>
            <person name="Shinn P."/>
            <person name="Southwick A.M."/>
            <person name="Sun H."/>
            <person name="Tallon L.J."/>
            <person name="Tambunga G."/>
            <person name="Toriumi M.J."/>
            <person name="Town C.D."/>
            <person name="Utterback T."/>
            <person name="Van Aken S."/>
            <person name="Vaysberg M."/>
            <person name="Vysotskaia V.S."/>
            <person name="Walker M."/>
            <person name="Wu D."/>
            <person name="Yu G."/>
            <person name="Fraser C.M."/>
            <person name="Venter J.C."/>
            <person name="Davis R.W."/>
        </authorList>
    </citation>
    <scope>NUCLEOTIDE SEQUENCE [LARGE SCALE GENOMIC DNA]</scope>
    <source>
        <strain evidence="7">cv. Columbia</strain>
    </source>
</reference>
<reference key="2">
    <citation type="journal article" date="2017" name="Plant J.">
        <title>Araport11: a complete reannotation of the Arabidopsis thaliana reference genome.</title>
        <authorList>
            <person name="Cheng C.Y."/>
            <person name="Krishnakumar V."/>
            <person name="Chan A.P."/>
            <person name="Thibaud-Nissen F."/>
            <person name="Schobel S."/>
            <person name="Town C.D."/>
        </authorList>
    </citation>
    <scope>GENOME REANNOTATION</scope>
    <source>
        <strain evidence="7">cv. Columbia</strain>
    </source>
</reference>
<reference key="3">
    <citation type="submission" date="2004-08" db="EMBL/GenBank/DDBJ databases">
        <authorList>
            <person name="Underwood B.A."/>
            <person name="Xiao Y.-L."/>
            <person name="Moskal W.A. Jr."/>
            <person name="Monaghan E.L."/>
            <person name="Wang W."/>
            <person name="Redman J.C."/>
            <person name="Wu H.C."/>
            <person name="Utterback T."/>
            <person name="Town C.D."/>
        </authorList>
    </citation>
    <scope>NUCLEOTIDE SEQUENCE [LARGE SCALE MRNA] (ISOFORMS 3 AND 2)</scope>
    <source>
        <strain>cv. Columbia</strain>
    </source>
</reference>
<reference key="4">
    <citation type="journal article" date="2006" name="Plant Biotechnol. J.">
        <title>Simultaneous high-throughput recombinational cloning of open reading frames in closed and open configurations.</title>
        <authorList>
            <person name="Underwood B.A."/>
            <person name="Vanderhaeghen R."/>
            <person name="Whitford R."/>
            <person name="Town C.D."/>
            <person name="Hilson P."/>
        </authorList>
    </citation>
    <scope>NUCLEOTIDE SEQUENCE [LARGE SCALE MRNA] (ISOFORMS 4 AND 5)</scope>
    <source>
        <strain>cv. Columbia</strain>
    </source>
</reference>
<reference key="5">
    <citation type="journal article" date="2006" name="BMC Genomics">
        <title>Cross genome comparisons of serine proteases in Arabidopsis and rice.</title>
        <authorList>
            <person name="Tripathi L.P."/>
            <person name="Sowdhamini R."/>
        </authorList>
    </citation>
    <scope>GENE FAMILY</scope>
    <scope>NOMENCLATURE</scope>
</reference>
<reference key="6">
    <citation type="journal article" date="2007" name="Genome Res.">
        <title>Functional and evolutionary implications of enhanced genomic analysis of rhomboid intramembrane proteases.</title>
        <authorList>
            <person name="Lemberg M.K."/>
            <person name="Freeman M."/>
        </authorList>
    </citation>
    <scope>GENE FAMILY</scope>
</reference>
<organism evidence="7">
    <name type="scientific">Arabidopsis thaliana</name>
    <name type="common">Mouse-ear cress</name>
    <dbReference type="NCBI Taxonomy" id="3702"/>
    <lineage>
        <taxon>Eukaryota</taxon>
        <taxon>Viridiplantae</taxon>
        <taxon>Streptophyta</taxon>
        <taxon>Embryophyta</taxon>
        <taxon>Tracheophyta</taxon>
        <taxon>Spermatophyta</taxon>
        <taxon>Magnoliopsida</taxon>
        <taxon>eudicotyledons</taxon>
        <taxon>Gunneridae</taxon>
        <taxon>Pentapetalae</taxon>
        <taxon>rosids</taxon>
        <taxon>malvids</taxon>
        <taxon>Brassicales</taxon>
        <taxon>Brassicaceae</taxon>
        <taxon>Camelineae</taxon>
        <taxon>Arabidopsis</taxon>
    </lineage>
</organism>
<gene>
    <name evidence="2" type="primary">RBL17</name>
    <name evidence="5" type="ordered locus">At1g74140</name>
    <name evidence="6" type="ORF">F9E11.9</name>
</gene>
<protein>
    <recommendedName>
        <fullName evidence="2">Rhomboid-like protein 17, chloroplastic</fullName>
        <shortName evidence="2">AtRBL17</shortName>
    </recommendedName>
</protein>
<evidence type="ECO:0000255" key="1"/>
<evidence type="ECO:0000303" key="2">
    <source>
    </source>
</evidence>
<evidence type="ECO:0000303" key="3">
    <source>
    </source>
</evidence>
<evidence type="ECO:0000305" key="4"/>
<evidence type="ECO:0000312" key="5">
    <source>
        <dbReference type="Araport" id="AT1G74140"/>
    </source>
</evidence>
<evidence type="ECO:0000312" key="6">
    <source>
        <dbReference type="EMBL" id="AAG51876.1"/>
    </source>
</evidence>
<evidence type="ECO:0000312" key="7">
    <source>
        <dbReference type="Proteomes" id="UP000006548"/>
    </source>
</evidence>
<comment type="function">
    <text evidence="2">Probable rhomboid-type serine protease that catalyzes intramembrane proteolysis.</text>
</comment>
<comment type="subcellular location">
    <subcellularLocation>
        <location evidence="1">Plastid</location>
        <location evidence="1">Chloroplast membrane</location>
        <topology evidence="1">Multi-pass membrane protein</topology>
    </subcellularLocation>
</comment>
<comment type="alternative products">
    <event type="alternative splicing"/>
    <isoform>
        <id>B3H707-1</id>
        <name>1</name>
        <sequence type="displayed"/>
    </isoform>
    <isoform>
        <id>B3H707-2</id>
        <name>2</name>
        <sequence type="described" ref="VSP_057736"/>
    </isoform>
    <isoform>
        <id>B3H707-3</id>
        <name>3</name>
        <sequence type="described" ref="VSP_057735 VSP_057736"/>
    </isoform>
    <isoform>
        <id>B3H707-4</id>
        <name>4</name>
        <sequence type="described" ref="VSP_057735"/>
    </isoform>
    <isoform>
        <id>B3H707-5</id>
        <name>5</name>
        <sequence type="described" ref="VSP_057737"/>
    </isoform>
</comment>
<comment type="similarity">
    <text evidence="4">Belongs to the peptidase S54 family.</text>
</comment>
<comment type="caution">
    <text evidence="3">Might be an inactive rhomboid-type serine protease due to mismatches with the consensus active sites.</text>
</comment>
<comment type="sequence caution" evidence="4">
    <conflict type="erroneous gene model prediction">
        <sequence resource="EMBL-CDS" id="AAG51876"/>
    </conflict>
</comment>
<proteinExistence type="evidence at transcript level"/>
<dbReference type="EMBL" id="AC079678">
    <property type="protein sequence ID" value="AAG51876.1"/>
    <property type="status" value="ALT_SEQ"/>
    <property type="molecule type" value="Genomic_DNA"/>
</dbReference>
<dbReference type="EMBL" id="CP002684">
    <property type="protein sequence ID" value="AEE35555.1"/>
    <property type="molecule type" value="Genomic_DNA"/>
</dbReference>
<dbReference type="EMBL" id="CP002684">
    <property type="protein sequence ID" value="AEE35556.1"/>
    <property type="molecule type" value="Genomic_DNA"/>
</dbReference>
<dbReference type="EMBL" id="CP002684">
    <property type="protein sequence ID" value="AEE35557.1"/>
    <property type="molecule type" value="Genomic_DNA"/>
</dbReference>
<dbReference type="EMBL" id="CP002684">
    <property type="protein sequence ID" value="AEE35558.1"/>
    <property type="molecule type" value="Genomic_DNA"/>
</dbReference>
<dbReference type="EMBL" id="CP002684">
    <property type="protein sequence ID" value="AEE35559.1"/>
    <property type="molecule type" value="Genomic_DNA"/>
</dbReference>
<dbReference type="EMBL" id="AY735564">
    <property type="protein sequence ID" value="AAU44434.1"/>
    <property type="molecule type" value="mRNA"/>
</dbReference>
<dbReference type="EMBL" id="AY735565">
    <property type="protein sequence ID" value="AAU44435.1"/>
    <property type="molecule type" value="mRNA"/>
</dbReference>
<dbReference type="EMBL" id="DQ446427">
    <property type="protein sequence ID" value="ABE65770.1"/>
    <property type="molecule type" value="mRNA"/>
</dbReference>
<dbReference type="EMBL" id="DQ446428">
    <property type="protein sequence ID" value="ABE65771.1"/>
    <property type="molecule type" value="mRNA"/>
</dbReference>
<dbReference type="PIR" id="E96769">
    <property type="entry name" value="E96769"/>
</dbReference>
<dbReference type="RefSeq" id="NP_001031280.1">
    <molecule id="B3H707-3"/>
    <property type="nucleotide sequence ID" value="NM_001036203.1"/>
</dbReference>
<dbReference type="RefSeq" id="NP_001077819.1">
    <molecule id="B3H707-4"/>
    <property type="nucleotide sequence ID" value="NM_001084350.2"/>
</dbReference>
<dbReference type="RefSeq" id="NP_001077820.1">
    <molecule id="B3H707-5"/>
    <property type="nucleotide sequence ID" value="NM_001084351.2"/>
</dbReference>
<dbReference type="RefSeq" id="NP_001117599.1">
    <molecule id="B3H707-1"/>
    <property type="nucleotide sequence ID" value="NM_001124127.1"/>
</dbReference>
<dbReference type="RefSeq" id="NP_177554.2">
    <molecule id="B3H707-2"/>
    <property type="nucleotide sequence ID" value="NM_106074.2"/>
</dbReference>
<dbReference type="FunCoup" id="B3H707">
    <property type="interactions" value="1256"/>
</dbReference>
<dbReference type="STRING" id="3702.B3H707"/>
<dbReference type="MEROPS" id="S54.A07"/>
<dbReference type="PaxDb" id="3702-AT1G74140.5"/>
<dbReference type="ProteomicsDB" id="236492">
    <molecule id="B3H707-1"/>
</dbReference>
<dbReference type="EnsemblPlants" id="AT1G74140.1">
    <molecule id="B3H707-2"/>
    <property type="protein sequence ID" value="AT1G74140.1"/>
    <property type="gene ID" value="AT1G74140"/>
</dbReference>
<dbReference type="EnsemblPlants" id="AT1G74140.2">
    <molecule id="B3H707-3"/>
    <property type="protein sequence ID" value="AT1G74140.2"/>
    <property type="gene ID" value="AT1G74140"/>
</dbReference>
<dbReference type="EnsemblPlants" id="AT1G74140.3">
    <molecule id="B3H707-4"/>
    <property type="protein sequence ID" value="AT1G74140.3"/>
    <property type="gene ID" value="AT1G74140"/>
</dbReference>
<dbReference type="EnsemblPlants" id="AT1G74140.4">
    <molecule id="B3H707-5"/>
    <property type="protein sequence ID" value="AT1G74140.4"/>
    <property type="gene ID" value="AT1G74140"/>
</dbReference>
<dbReference type="EnsemblPlants" id="AT1G74140.5">
    <molecule id="B3H707-1"/>
    <property type="protein sequence ID" value="AT1G74140.5"/>
    <property type="gene ID" value="AT1G74140"/>
</dbReference>
<dbReference type="GeneID" id="843754"/>
<dbReference type="Gramene" id="AT1G74140.1">
    <molecule id="B3H707-2"/>
    <property type="protein sequence ID" value="AT1G74140.1"/>
    <property type="gene ID" value="AT1G74140"/>
</dbReference>
<dbReference type="Gramene" id="AT1G74140.2">
    <molecule id="B3H707-3"/>
    <property type="protein sequence ID" value="AT1G74140.2"/>
    <property type="gene ID" value="AT1G74140"/>
</dbReference>
<dbReference type="Gramene" id="AT1G74140.3">
    <molecule id="B3H707-4"/>
    <property type="protein sequence ID" value="AT1G74140.3"/>
    <property type="gene ID" value="AT1G74140"/>
</dbReference>
<dbReference type="Gramene" id="AT1G74140.4">
    <molecule id="B3H707-5"/>
    <property type="protein sequence ID" value="AT1G74140.4"/>
    <property type="gene ID" value="AT1G74140"/>
</dbReference>
<dbReference type="Gramene" id="AT1G74140.5">
    <molecule id="B3H707-1"/>
    <property type="protein sequence ID" value="AT1G74140.5"/>
    <property type="gene ID" value="AT1G74140"/>
</dbReference>
<dbReference type="KEGG" id="ath:AT1G74140"/>
<dbReference type="Araport" id="AT1G74140"/>
<dbReference type="TAIR" id="AT1G74140"/>
<dbReference type="eggNOG" id="KOG2980">
    <property type="taxonomic scope" value="Eukaryota"/>
</dbReference>
<dbReference type="InParanoid" id="B3H707"/>
<dbReference type="OMA" id="AIHYLNF"/>
<dbReference type="OrthoDB" id="418595at2759"/>
<dbReference type="PhylomeDB" id="B3H707"/>
<dbReference type="PRO" id="PR:B3H707"/>
<dbReference type="Proteomes" id="UP000006548">
    <property type="component" value="Chromosome 1"/>
</dbReference>
<dbReference type="ExpressionAtlas" id="B3H707">
    <property type="expression patterns" value="baseline and differential"/>
</dbReference>
<dbReference type="GO" id="GO:0031969">
    <property type="term" value="C:chloroplast membrane"/>
    <property type="evidence" value="ECO:0007669"/>
    <property type="project" value="UniProtKB-SubCell"/>
</dbReference>
<dbReference type="GO" id="GO:0004252">
    <property type="term" value="F:serine-type endopeptidase activity"/>
    <property type="evidence" value="ECO:0007669"/>
    <property type="project" value="InterPro"/>
</dbReference>
<dbReference type="Gene3D" id="1.20.1540.10">
    <property type="entry name" value="Rhomboid-like"/>
    <property type="match status" value="1"/>
</dbReference>
<dbReference type="InterPro" id="IPR022764">
    <property type="entry name" value="Peptidase_S54_rhomboid_dom"/>
</dbReference>
<dbReference type="InterPro" id="IPR035952">
    <property type="entry name" value="Rhomboid-like_sf"/>
</dbReference>
<dbReference type="InterPro" id="IPR050925">
    <property type="entry name" value="Rhomboid_protease_S54"/>
</dbReference>
<dbReference type="PANTHER" id="PTHR43731">
    <property type="entry name" value="RHOMBOID PROTEASE"/>
    <property type="match status" value="1"/>
</dbReference>
<dbReference type="PANTHER" id="PTHR43731:SF33">
    <property type="entry name" value="RHOMBOID-LIKE PROTEIN 16, CHLOROPLASTIC-RELATED"/>
    <property type="match status" value="1"/>
</dbReference>
<dbReference type="Pfam" id="PF01694">
    <property type="entry name" value="Rhomboid"/>
    <property type="match status" value="1"/>
</dbReference>
<dbReference type="SUPFAM" id="SSF144091">
    <property type="entry name" value="Rhomboid-like"/>
    <property type="match status" value="1"/>
</dbReference>
<name>RBL17_ARATH</name>
<accession>B3H707</accession>
<accession>B6EUB0</accession>
<accession>B6EUB8</accession>
<accession>F4HTU9</accession>
<accession>F4HTV0</accession>
<accession>Q1PFD5</accession>
<accession>Q1PFD6</accession>
<accession>Q5XVF7</accession>
<accession>Q5XVF8</accession>
<accession>Q9C6A3</accession>